<evidence type="ECO:0000255" key="1">
    <source>
        <dbReference type="HAMAP-Rule" id="MF_00575"/>
    </source>
</evidence>
<organism>
    <name type="scientific">Shewanella baltica (strain OS185)</name>
    <dbReference type="NCBI Taxonomy" id="402882"/>
    <lineage>
        <taxon>Bacteria</taxon>
        <taxon>Pseudomonadati</taxon>
        <taxon>Pseudomonadota</taxon>
        <taxon>Gammaproteobacteria</taxon>
        <taxon>Alteromonadales</taxon>
        <taxon>Shewanellaceae</taxon>
        <taxon>Shewanella</taxon>
    </lineage>
</organism>
<proteinExistence type="inferred from homology"/>
<gene>
    <name evidence="1" type="primary">lpxH</name>
    <name type="ordered locus">Shew185_1588</name>
</gene>
<feature type="chain" id="PRO_1000025082" description="UDP-2,3-diacylglucosamine hydrolase">
    <location>
        <begin position="1"/>
        <end position="240"/>
    </location>
</feature>
<feature type="binding site" evidence="1">
    <location>
        <position position="8"/>
    </location>
    <ligand>
        <name>Mn(2+)</name>
        <dbReference type="ChEBI" id="CHEBI:29035"/>
        <label>1</label>
    </ligand>
</feature>
<feature type="binding site" evidence="1">
    <location>
        <position position="10"/>
    </location>
    <ligand>
        <name>Mn(2+)</name>
        <dbReference type="ChEBI" id="CHEBI:29035"/>
        <label>1</label>
    </ligand>
</feature>
<feature type="binding site" evidence="1">
    <location>
        <position position="41"/>
    </location>
    <ligand>
        <name>Mn(2+)</name>
        <dbReference type="ChEBI" id="CHEBI:29035"/>
        <label>1</label>
    </ligand>
</feature>
<feature type="binding site" evidence="1">
    <location>
        <position position="41"/>
    </location>
    <ligand>
        <name>Mn(2+)</name>
        <dbReference type="ChEBI" id="CHEBI:29035"/>
        <label>2</label>
    </ligand>
</feature>
<feature type="binding site" evidence="1">
    <location>
        <begin position="78"/>
        <end position="79"/>
    </location>
    <ligand>
        <name>substrate</name>
    </ligand>
</feature>
<feature type="binding site" evidence="1">
    <location>
        <position position="78"/>
    </location>
    <ligand>
        <name>Mn(2+)</name>
        <dbReference type="ChEBI" id="CHEBI:29035"/>
        <label>2</label>
    </ligand>
</feature>
<feature type="binding site" evidence="1">
    <location>
        <position position="113"/>
    </location>
    <ligand>
        <name>Mn(2+)</name>
        <dbReference type="ChEBI" id="CHEBI:29035"/>
        <label>2</label>
    </ligand>
</feature>
<feature type="binding site" evidence="1">
    <location>
        <position position="121"/>
    </location>
    <ligand>
        <name>substrate</name>
    </ligand>
</feature>
<feature type="binding site" evidence="1">
    <location>
        <position position="159"/>
    </location>
    <ligand>
        <name>substrate</name>
    </ligand>
</feature>
<feature type="binding site" evidence="1">
    <location>
        <position position="163"/>
    </location>
    <ligand>
        <name>substrate</name>
    </ligand>
</feature>
<feature type="binding site" evidence="1">
    <location>
        <position position="166"/>
    </location>
    <ligand>
        <name>substrate</name>
    </ligand>
</feature>
<feature type="binding site" evidence="1">
    <location>
        <position position="194"/>
    </location>
    <ligand>
        <name>Mn(2+)</name>
        <dbReference type="ChEBI" id="CHEBI:29035"/>
        <label>2</label>
    </ligand>
</feature>
<feature type="binding site" evidence="1">
    <location>
        <position position="194"/>
    </location>
    <ligand>
        <name>substrate</name>
    </ligand>
</feature>
<feature type="binding site" evidence="1">
    <location>
        <position position="196"/>
    </location>
    <ligand>
        <name>Mn(2+)</name>
        <dbReference type="ChEBI" id="CHEBI:29035"/>
        <label>1</label>
    </ligand>
</feature>
<sequence>MRTLFIGDLHLSADRLDITQAFTRFLDTELDDADALYILGDLFEVWVGDDIALPFALELAEKLKQVSQKLPVYFIHGNRDFMLGKQFARAAGMQILPEVTCLNLYGVETVILHGDSLCTLDKAYQRFRKLRSLSLARWLYGCLSKKTRQGIADKIRSNSKSSNQQKSYTIMDVEPNAVDALFAKTHTKHMIHGHTHRPAIHLLANDCQRIVVGDWYEQGSVLSVSAEGINLQSLPFEHTT</sequence>
<name>LPXH_SHEB8</name>
<reference key="1">
    <citation type="submission" date="2007-07" db="EMBL/GenBank/DDBJ databases">
        <title>Complete sequence of chromosome of Shewanella baltica OS185.</title>
        <authorList>
            <consortium name="US DOE Joint Genome Institute"/>
            <person name="Copeland A."/>
            <person name="Lucas S."/>
            <person name="Lapidus A."/>
            <person name="Barry K."/>
            <person name="Glavina del Rio T."/>
            <person name="Dalin E."/>
            <person name="Tice H."/>
            <person name="Pitluck S."/>
            <person name="Sims D."/>
            <person name="Brettin T."/>
            <person name="Bruce D."/>
            <person name="Detter J.C."/>
            <person name="Han C."/>
            <person name="Schmutz J."/>
            <person name="Larimer F."/>
            <person name="Land M."/>
            <person name="Hauser L."/>
            <person name="Kyrpides N."/>
            <person name="Mikhailova N."/>
            <person name="Brettar I."/>
            <person name="Rodrigues J."/>
            <person name="Konstantinidis K."/>
            <person name="Tiedje J."/>
            <person name="Richardson P."/>
        </authorList>
    </citation>
    <scope>NUCLEOTIDE SEQUENCE [LARGE SCALE GENOMIC DNA]</scope>
    <source>
        <strain>OS185</strain>
    </source>
</reference>
<keyword id="KW-0997">Cell inner membrane</keyword>
<keyword id="KW-1003">Cell membrane</keyword>
<keyword id="KW-0378">Hydrolase</keyword>
<keyword id="KW-0441">Lipid A biosynthesis</keyword>
<keyword id="KW-0444">Lipid biosynthesis</keyword>
<keyword id="KW-0443">Lipid metabolism</keyword>
<keyword id="KW-0464">Manganese</keyword>
<keyword id="KW-0472">Membrane</keyword>
<keyword id="KW-0479">Metal-binding</keyword>
<protein>
    <recommendedName>
        <fullName evidence="1">UDP-2,3-diacylglucosamine hydrolase</fullName>
        <ecNumber evidence="1">3.6.1.54</ecNumber>
    </recommendedName>
    <alternativeName>
        <fullName evidence="1">UDP-2,3-diacylglucosamine diphosphatase</fullName>
    </alternativeName>
</protein>
<comment type="function">
    <text evidence="1">Hydrolyzes the pyrophosphate bond of UDP-2,3-diacylglucosamine to yield 2,3-diacylglucosamine 1-phosphate (lipid X) and UMP by catalyzing the attack of water at the alpha-P atom. Involved in the biosynthesis of lipid A, a phosphorylated glycolipid that anchors the lipopolysaccharide to the outer membrane of the cell.</text>
</comment>
<comment type="catalytic activity">
    <reaction evidence="1">
        <text>UDP-2-N,3-O-bis[(3R)-3-hydroxytetradecanoyl]-alpha-D-glucosamine + H2O = 2-N,3-O-bis[(3R)-3-hydroxytetradecanoyl]-alpha-D-glucosaminyl 1-phosphate + UMP + 2 H(+)</text>
        <dbReference type="Rhea" id="RHEA:25213"/>
        <dbReference type="ChEBI" id="CHEBI:15377"/>
        <dbReference type="ChEBI" id="CHEBI:15378"/>
        <dbReference type="ChEBI" id="CHEBI:57865"/>
        <dbReference type="ChEBI" id="CHEBI:57957"/>
        <dbReference type="ChEBI" id="CHEBI:78847"/>
        <dbReference type="EC" id="3.6.1.54"/>
    </reaction>
</comment>
<comment type="cofactor">
    <cofactor evidence="1">
        <name>Mn(2+)</name>
        <dbReference type="ChEBI" id="CHEBI:29035"/>
    </cofactor>
    <text evidence="1">Binds 2 Mn(2+) ions per subunit in a binuclear metal center.</text>
</comment>
<comment type="pathway">
    <text evidence="1">Glycolipid biosynthesis; lipid IV(A) biosynthesis; lipid IV(A) from (3R)-3-hydroxytetradecanoyl-[acyl-carrier-protein] and UDP-N-acetyl-alpha-D-glucosamine: step 4/6.</text>
</comment>
<comment type="subcellular location">
    <subcellularLocation>
        <location evidence="1">Cell inner membrane</location>
        <topology evidence="1">Peripheral membrane protein</topology>
        <orientation evidence="1">Cytoplasmic side</orientation>
    </subcellularLocation>
</comment>
<comment type="similarity">
    <text evidence="1">Belongs to the LpxH family.</text>
</comment>
<accession>A6WLP6</accession>
<dbReference type="EC" id="3.6.1.54" evidence="1"/>
<dbReference type="EMBL" id="CP000753">
    <property type="protein sequence ID" value="ABS07735.1"/>
    <property type="molecule type" value="Genomic_DNA"/>
</dbReference>
<dbReference type="RefSeq" id="WP_012088814.1">
    <property type="nucleotide sequence ID" value="NC_009665.1"/>
</dbReference>
<dbReference type="SMR" id="A6WLP6"/>
<dbReference type="KEGG" id="sbm:Shew185_1588"/>
<dbReference type="HOGENOM" id="CLU_074586_0_0_6"/>
<dbReference type="UniPathway" id="UPA00359">
    <property type="reaction ID" value="UER00480"/>
</dbReference>
<dbReference type="GO" id="GO:0005737">
    <property type="term" value="C:cytoplasm"/>
    <property type="evidence" value="ECO:0007669"/>
    <property type="project" value="InterPro"/>
</dbReference>
<dbReference type="GO" id="GO:0019897">
    <property type="term" value="C:extrinsic component of plasma membrane"/>
    <property type="evidence" value="ECO:0007669"/>
    <property type="project" value="UniProtKB-UniRule"/>
</dbReference>
<dbReference type="GO" id="GO:0030145">
    <property type="term" value="F:manganese ion binding"/>
    <property type="evidence" value="ECO:0007669"/>
    <property type="project" value="UniProtKB-UniRule"/>
</dbReference>
<dbReference type="GO" id="GO:0008758">
    <property type="term" value="F:UDP-2,3-diacylglucosamine hydrolase activity"/>
    <property type="evidence" value="ECO:0007669"/>
    <property type="project" value="UniProtKB-UniRule"/>
</dbReference>
<dbReference type="GO" id="GO:0009245">
    <property type="term" value="P:lipid A biosynthetic process"/>
    <property type="evidence" value="ECO:0007669"/>
    <property type="project" value="UniProtKB-UniRule"/>
</dbReference>
<dbReference type="CDD" id="cd07398">
    <property type="entry name" value="MPP_YbbF-LpxH"/>
    <property type="match status" value="1"/>
</dbReference>
<dbReference type="Gene3D" id="3.60.21.10">
    <property type="match status" value="1"/>
</dbReference>
<dbReference type="HAMAP" id="MF_00575">
    <property type="entry name" value="LpxH"/>
    <property type="match status" value="1"/>
</dbReference>
<dbReference type="InterPro" id="IPR004843">
    <property type="entry name" value="Calcineurin-like_PHP_ApaH"/>
</dbReference>
<dbReference type="InterPro" id="IPR043461">
    <property type="entry name" value="LpxH-like"/>
</dbReference>
<dbReference type="InterPro" id="IPR029052">
    <property type="entry name" value="Metallo-depent_PP-like"/>
</dbReference>
<dbReference type="InterPro" id="IPR010138">
    <property type="entry name" value="UDP-diacylglucosamine_Hdrlase"/>
</dbReference>
<dbReference type="NCBIfam" id="TIGR01854">
    <property type="entry name" value="lipid_A_lpxH"/>
    <property type="match status" value="1"/>
</dbReference>
<dbReference type="NCBIfam" id="NF003743">
    <property type="entry name" value="PRK05340.1"/>
    <property type="match status" value="1"/>
</dbReference>
<dbReference type="PANTHER" id="PTHR34990:SF1">
    <property type="entry name" value="UDP-2,3-DIACYLGLUCOSAMINE HYDROLASE"/>
    <property type="match status" value="1"/>
</dbReference>
<dbReference type="PANTHER" id="PTHR34990">
    <property type="entry name" value="UDP-2,3-DIACYLGLUCOSAMINE HYDROLASE-RELATED"/>
    <property type="match status" value="1"/>
</dbReference>
<dbReference type="Pfam" id="PF00149">
    <property type="entry name" value="Metallophos"/>
    <property type="match status" value="1"/>
</dbReference>
<dbReference type="SUPFAM" id="SSF56300">
    <property type="entry name" value="Metallo-dependent phosphatases"/>
    <property type="match status" value="1"/>
</dbReference>